<evidence type="ECO:0000250" key="1"/>
<evidence type="ECO:0000255" key="2"/>
<evidence type="ECO:0000256" key="3">
    <source>
        <dbReference type="SAM" id="MobiDB-lite"/>
    </source>
</evidence>
<evidence type="ECO:0000269" key="4">
    <source>
    </source>
</evidence>
<evidence type="ECO:0000269" key="5">
    <source>
    </source>
</evidence>
<evidence type="ECO:0000269" key="6">
    <source>
    </source>
</evidence>
<evidence type="ECO:0000303" key="7">
    <source>
    </source>
</evidence>
<evidence type="ECO:0000305" key="8"/>
<evidence type="ECO:0000305" key="9">
    <source>
    </source>
</evidence>
<evidence type="ECO:0007829" key="10">
    <source>
        <dbReference type="PDB" id="5EPP"/>
    </source>
</evidence>
<accession>Q8TEB9</accession>
<accession>Q495B9</accession>
<accession>Q53S43</accession>
<accession>Q5EBM8</accession>
<accession>Q6P5V8</accession>
<accession>Q8IV60</accession>
<accession>Q9H057</accession>
<dbReference type="EC" id="3.4.21.105"/>
<dbReference type="EMBL" id="AY640233">
    <property type="protein sequence ID" value="AAU14246.1"/>
    <property type="molecule type" value="mRNA"/>
</dbReference>
<dbReference type="EMBL" id="AK074258">
    <property type="protein sequence ID" value="BAB85031.1"/>
    <property type="molecule type" value="mRNA"/>
</dbReference>
<dbReference type="EMBL" id="AC010735">
    <property type="status" value="NOT_ANNOTATED_CDS"/>
    <property type="molecule type" value="Genomic_DNA"/>
</dbReference>
<dbReference type="EMBL" id="AC073149">
    <property type="protein sequence ID" value="AAY24060.1"/>
    <property type="molecule type" value="Genomic_DNA"/>
</dbReference>
<dbReference type="EMBL" id="BC027900">
    <property type="protein sequence ID" value="AAH27900.1"/>
    <property type="molecule type" value="mRNA"/>
</dbReference>
<dbReference type="EMBL" id="BC062636">
    <property type="protein sequence ID" value="AAH62636.1"/>
    <property type="molecule type" value="mRNA"/>
</dbReference>
<dbReference type="EMBL" id="BC089404">
    <property type="protein sequence ID" value="AAH89404.1"/>
    <property type="molecule type" value="mRNA"/>
</dbReference>
<dbReference type="EMBL" id="BC101262">
    <property type="protein sequence ID" value="AAI01263.1"/>
    <property type="molecule type" value="mRNA"/>
</dbReference>
<dbReference type="EMBL" id="BC101263">
    <property type="protein sequence ID" value="AAI01264.1"/>
    <property type="molecule type" value="mRNA"/>
</dbReference>
<dbReference type="EMBL" id="BC101264">
    <property type="protein sequence ID" value="AAI01265.1"/>
    <property type="molecule type" value="mRNA"/>
</dbReference>
<dbReference type="EMBL" id="BC101265">
    <property type="protein sequence ID" value="AAI01266.1"/>
    <property type="molecule type" value="mRNA"/>
</dbReference>
<dbReference type="EMBL" id="BC111056">
    <property type="protein sequence ID" value="AAI11057.1"/>
    <property type="molecule type" value="mRNA"/>
</dbReference>
<dbReference type="EMBL" id="AL512717">
    <property type="protein sequence ID" value="CAC21658.2"/>
    <property type="molecule type" value="mRNA"/>
</dbReference>
<dbReference type="CCDS" id="CCDS2464.1">
    <molecule id="Q8TEB9-1"/>
</dbReference>
<dbReference type="RefSeq" id="NP_001161080.1">
    <molecule id="Q8TEB9-1"/>
    <property type="nucleotide sequence ID" value="NM_001167608.3"/>
</dbReference>
<dbReference type="RefSeq" id="NP_001335998.1">
    <molecule id="Q8TEB9-1"/>
    <property type="nucleotide sequence ID" value="NM_001349069.2"/>
</dbReference>
<dbReference type="RefSeq" id="NP_001336000.1">
    <molecule id="Q8TEB9-1"/>
    <property type="nucleotide sequence ID" value="NM_001349071.2"/>
</dbReference>
<dbReference type="RefSeq" id="NP_001336001.1">
    <molecule id="Q8TEB9-1"/>
    <property type="nucleotide sequence ID" value="NM_001349072.2"/>
</dbReference>
<dbReference type="RefSeq" id="NP_115652.2">
    <molecule id="Q8TEB9-1"/>
    <property type="nucleotide sequence ID" value="NM_032276.3"/>
</dbReference>
<dbReference type="RefSeq" id="XP_016860572.1">
    <molecule id="Q8TEB9-1"/>
    <property type="nucleotide sequence ID" value="XM_017005083.2"/>
</dbReference>
<dbReference type="RefSeq" id="XP_016860573.1">
    <molecule id="Q8TEB9-1"/>
    <property type="nucleotide sequence ID" value="XM_017005084.3"/>
</dbReference>
<dbReference type="RefSeq" id="XP_016860574.1">
    <molecule id="Q8TEB9-1"/>
    <property type="nucleotide sequence ID" value="XM_017005085.3"/>
</dbReference>
<dbReference type="RefSeq" id="XP_016860575.1">
    <molecule id="Q8TEB9-1"/>
    <property type="nucleotide sequence ID" value="XM_017005086.3"/>
</dbReference>
<dbReference type="RefSeq" id="XP_016860576.1">
    <molecule id="Q8TEB9-1"/>
    <property type="nucleotide sequence ID" value="XM_017005087.3"/>
</dbReference>
<dbReference type="RefSeq" id="XP_016860577.1">
    <molecule id="Q8TEB9-1"/>
    <property type="nucleotide sequence ID" value="XM_017005088.2"/>
</dbReference>
<dbReference type="RefSeq" id="XP_016860578.1">
    <property type="nucleotide sequence ID" value="XM_017005089.1"/>
</dbReference>
<dbReference type="RefSeq" id="XP_016860579.1">
    <molecule id="Q8TEB9-1"/>
    <property type="nucleotide sequence ID" value="XM_017005090.3"/>
</dbReference>
<dbReference type="RefSeq" id="XP_016860580.1">
    <property type="nucleotide sequence ID" value="XM_017005091.1"/>
</dbReference>
<dbReference type="RefSeq" id="XP_016860581.1">
    <molecule id="Q8TEB9-1"/>
    <property type="nucleotide sequence ID" value="XM_017005092.3"/>
</dbReference>
<dbReference type="RefSeq" id="XP_047301951.1">
    <molecule id="Q8TEB9-1"/>
    <property type="nucleotide sequence ID" value="XM_047445995.1"/>
</dbReference>
<dbReference type="RefSeq" id="XP_047301953.1">
    <molecule id="Q8TEB9-1"/>
    <property type="nucleotide sequence ID" value="XM_047445997.1"/>
</dbReference>
<dbReference type="RefSeq" id="XP_047301954.1">
    <molecule id="Q8TEB9-1"/>
    <property type="nucleotide sequence ID" value="XM_047445998.1"/>
</dbReference>
<dbReference type="RefSeq" id="XP_047301955.1">
    <molecule id="Q8TEB9-1"/>
    <property type="nucleotide sequence ID" value="XM_047445999.1"/>
</dbReference>
<dbReference type="RefSeq" id="XP_054200133.1">
    <molecule id="Q8TEB9-1"/>
    <property type="nucleotide sequence ID" value="XM_054344158.1"/>
</dbReference>
<dbReference type="RefSeq" id="XP_054200134.1">
    <molecule id="Q8TEB9-1"/>
    <property type="nucleotide sequence ID" value="XM_054344159.1"/>
</dbReference>
<dbReference type="RefSeq" id="XP_054200135.1">
    <molecule id="Q8TEB9-1"/>
    <property type="nucleotide sequence ID" value="XM_054344160.1"/>
</dbReference>
<dbReference type="RefSeq" id="XP_054200136.1">
    <molecule id="Q8TEB9-1"/>
    <property type="nucleotide sequence ID" value="XM_054344161.1"/>
</dbReference>
<dbReference type="RefSeq" id="XP_054200137.1">
    <molecule id="Q8TEB9-1"/>
    <property type="nucleotide sequence ID" value="XM_054344162.1"/>
</dbReference>
<dbReference type="RefSeq" id="XP_054200138.1">
    <molecule id="Q8TEB9-1"/>
    <property type="nucleotide sequence ID" value="XM_054344163.1"/>
</dbReference>
<dbReference type="RefSeq" id="XP_054200139.1">
    <molecule id="Q8TEB9-1"/>
    <property type="nucleotide sequence ID" value="XM_054344164.1"/>
</dbReference>
<dbReference type="RefSeq" id="XP_054200140.1">
    <molecule id="Q8TEB9-1"/>
    <property type="nucleotide sequence ID" value="XM_054344165.1"/>
</dbReference>
<dbReference type="RefSeq" id="XP_054200141.1">
    <molecule id="Q8TEB9-1"/>
    <property type="nucleotide sequence ID" value="XM_054344166.1"/>
</dbReference>
<dbReference type="RefSeq" id="XP_054200142.1">
    <molecule id="Q8TEB9-1"/>
    <property type="nucleotide sequence ID" value="XM_054344167.1"/>
</dbReference>
<dbReference type="PDB" id="5EPP">
    <property type="method" value="X-ray"/>
    <property type="resolution" value="1.88 A"/>
    <property type="chains" value="B=300-314"/>
</dbReference>
<dbReference type="PDBsum" id="5EPP"/>
<dbReference type="SMR" id="Q8TEB9"/>
<dbReference type="BioGRID" id="123968">
    <property type="interactions" value="357"/>
</dbReference>
<dbReference type="FunCoup" id="Q8TEB9">
    <property type="interactions" value="1481"/>
</dbReference>
<dbReference type="IntAct" id="Q8TEB9">
    <property type="interactions" value="162"/>
</dbReference>
<dbReference type="STRING" id="9606.ENSP00000375914"/>
<dbReference type="MEROPS" id="S54.008"/>
<dbReference type="TCDB" id="9.B.104.4.1">
    <property type="family name" value="the rhomboid protease (rhomboid) family"/>
</dbReference>
<dbReference type="iPTMnet" id="Q8TEB9"/>
<dbReference type="PhosphoSitePlus" id="Q8TEB9"/>
<dbReference type="BioMuta" id="RHBDD1"/>
<dbReference type="DMDM" id="74723955"/>
<dbReference type="jPOST" id="Q8TEB9"/>
<dbReference type="MassIVE" id="Q8TEB9"/>
<dbReference type="PaxDb" id="9606-ENSP00000375914"/>
<dbReference type="PeptideAtlas" id="Q8TEB9"/>
<dbReference type="ProteomicsDB" id="74441">
    <molecule id="Q8TEB9-1"/>
</dbReference>
<dbReference type="ProteomicsDB" id="74442">
    <molecule id="Q8TEB9-2"/>
</dbReference>
<dbReference type="Pumba" id="Q8TEB9"/>
<dbReference type="Antibodypedia" id="3019">
    <property type="antibodies" value="73 antibodies from 25 providers"/>
</dbReference>
<dbReference type="DNASU" id="84236"/>
<dbReference type="Ensembl" id="ENST00000341329.7">
    <molecule id="Q8TEB9-1"/>
    <property type="protein sequence ID" value="ENSP00000344779.3"/>
    <property type="gene ID" value="ENSG00000144468.17"/>
</dbReference>
<dbReference type="Ensembl" id="ENST00000392062.7">
    <molecule id="Q8TEB9-1"/>
    <property type="protein sequence ID" value="ENSP00000375914.2"/>
    <property type="gene ID" value="ENSG00000144468.17"/>
</dbReference>
<dbReference type="GeneID" id="84236"/>
<dbReference type="KEGG" id="hsa:84236"/>
<dbReference type="MANE-Select" id="ENST00000392062.7">
    <property type="protein sequence ID" value="ENSP00000375914.2"/>
    <property type="RefSeq nucleotide sequence ID" value="NM_001167608.3"/>
    <property type="RefSeq protein sequence ID" value="NP_001161080.1"/>
</dbReference>
<dbReference type="UCSC" id="uc002voi.4">
    <molecule id="Q8TEB9-1"/>
    <property type="organism name" value="human"/>
</dbReference>
<dbReference type="AGR" id="HGNC:23081"/>
<dbReference type="CTD" id="84236"/>
<dbReference type="DisGeNET" id="84236"/>
<dbReference type="GeneCards" id="RHBDD1"/>
<dbReference type="HGNC" id="HGNC:23081">
    <property type="gene designation" value="RHBDD1"/>
</dbReference>
<dbReference type="HPA" id="ENSG00000144468">
    <property type="expression patterns" value="Low tissue specificity"/>
</dbReference>
<dbReference type="MIM" id="617515">
    <property type="type" value="gene"/>
</dbReference>
<dbReference type="neXtProt" id="NX_Q8TEB9"/>
<dbReference type="OpenTargets" id="ENSG00000144468"/>
<dbReference type="PharmGKB" id="PA143485593"/>
<dbReference type="VEuPathDB" id="HostDB:ENSG00000144468"/>
<dbReference type="eggNOG" id="KOG2632">
    <property type="taxonomic scope" value="Eukaryota"/>
</dbReference>
<dbReference type="GeneTree" id="ENSGT00390000010744"/>
<dbReference type="HOGENOM" id="CLU_075166_0_0_1"/>
<dbReference type="InParanoid" id="Q8TEB9"/>
<dbReference type="OMA" id="IWFAYII"/>
<dbReference type="OrthoDB" id="10257275at2759"/>
<dbReference type="PAN-GO" id="Q8TEB9">
    <property type="GO annotations" value="4 GO annotations based on evolutionary models"/>
</dbReference>
<dbReference type="PhylomeDB" id="Q8TEB9"/>
<dbReference type="TreeFam" id="TF328476"/>
<dbReference type="BRENDA" id="3.4.21.105">
    <property type="organism ID" value="2681"/>
</dbReference>
<dbReference type="PathwayCommons" id="Q8TEB9"/>
<dbReference type="SignaLink" id="Q8TEB9"/>
<dbReference type="BioGRID-ORCS" id="84236">
    <property type="hits" value="6 hits in 1152 CRISPR screens"/>
</dbReference>
<dbReference type="ChiTaRS" id="RHBDD1">
    <property type="organism name" value="human"/>
</dbReference>
<dbReference type="GenomeRNAi" id="84236"/>
<dbReference type="Pharos" id="Q8TEB9">
    <property type="development level" value="Tbio"/>
</dbReference>
<dbReference type="PRO" id="PR:Q8TEB9"/>
<dbReference type="Proteomes" id="UP000005640">
    <property type="component" value="Chromosome 2"/>
</dbReference>
<dbReference type="RNAct" id="Q8TEB9">
    <property type="molecule type" value="protein"/>
</dbReference>
<dbReference type="Bgee" id="ENSG00000144468">
    <property type="expression patterns" value="Expressed in bone marrow cell and 188 other cell types or tissues"/>
</dbReference>
<dbReference type="ExpressionAtlas" id="Q8TEB9">
    <property type="expression patterns" value="baseline and differential"/>
</dbReference>
<dbReference type="GO" id="GO:0005783">
    <property type="term" value="C:endoplasmic reticulum"/>
    <property type="evidence" value="ECO:0000314"/>
    <property type="project" value="ParkinsonsUK-UCL"/>
</dbReference>
<dbReference type="GO" id="GO:0005789">
    <property type="term" value="C:endoplasmic reticulum membrane"/>
    <property type="evidence" value="ECO:0000250"/>
    <property type="project" value="UniProtKB"/>
</dbReference>
<dbReference type="GO" id="GO:0044322">
    <property type="term" value="C:endoplasmic reticulum quality control compartment"/>
    <property type="evidence" value="ECO:0000250"/>
    <property type="project" value="UniProtKB"/>
</dbReference>
<dbReference type="GO" id="GO:0031966">
    <property type="term" value="C:mitochondrial membrane"/>
    <property type="evidence" value="ECO:0007669"/>
    <property type="project" value="UniProtKB-SubCell"/>
</dbReference>
<dbReference type="GO" id="GO:0004175">
    <property type="term" value="F:endopeptidase activity"/>
    <property type="evidence" value="ECO:0000314"/>
    <property type="project" value="UniProtKB"/>
</dbReference>
<dbReference type="GO" id="GO:0004252">
    <property type="term" value="F:serine-type endopeptidase activity"/>
    <property type="evidence" value="ECO:0000314"/>
    <property type="project" value="UniProtKB"/>
</dbReference>
<dbReference type="GO" id="GO:0006915">
    <property type="term" value="P:apoptotic process"/>
    <property type="evidence" value="ECO:0007669"/>
    <property type="project" value="UniProtKB-KW"/>
</dbReference>
<dbReference type="GO" id="GO:0034620">
    <property type="term" value="P:cellular response to unfolded protein"/>
    <property type="evidence" value="ECO:0000270"/>
    <property type="project" value="ParkinsonsUK-UCL"/>
</dbReference>
<dbReference type="GO" id="GO:0034644">
    <property type="term" value="P:cellular response to UV"/>
    <property type="evidence" value="ECO:0000250"/>
    <property type="project" value="UniProtKB"/>
</dbReference>
<dbReference type="GO" id="GO:0036503">
    <property type="term" value="P:ERAD pathway"/>
    <property type="evidence" value="ECO:0000250"/>
    <property type="project" value="UniProtKB"/>
</dbReference>
<dbReference type="GO" id="GO:0031293">
    <property type="term" value="P:membrane protein intracellular domain proteolysis"/>
    <property type="evidence" value="ECO:0000250"/>
    <property type="project" value="UniProtKB"/>
</dbReference>
<dbReference type="GO" id="GO:0033619">
    <property type="term" value="P:membrane protein proteolysis"/>
    <property type="evidence" value="ECO:0000314"/>
    <property type="project" value="UniProtKB"/>
</dbReference>
<dbReference type="GO" id="GO:1904211">
    <property type="term" value="P:membrane protein proteolysis involved in retrograde protein transport, ER to cytosol"/>
    <property type="evidence" value="ECO:0000250"/>
    <property type="project" value="ParkinsonsUK-UCL"/>
</dbReference>
<dbReference type="GO" id="GO:0043066">
    <property type="term" value="P:negative regulation of apoptotic process"/>
    <property type="evidence" value="ECO:0000314"/>
    <property type="project" value="UniProtKB"/>
</dbReference>
<dbReference type="GO" id="GO:0045732">
    <property type="term" value="P:positive regulation of protein catabolic process"/>
    <property type="evidence" value="ECO:0000314"/>
    <property type="project" value="UniProtKB"/>
</dbReference>
<dbReference type="GO" id="GO:0010954">
    <property type="term" value="P:positive regulation of protein processing"/>
    <property type="evidence" value="ECO:0000250"/>
    <property type="project" value="UniProtKB"/>
</dbReference>
<dbReference type="GO" id="GO:0051047">
    <property type="term" value="P:positive regulation of secretion"/>
    <property type="evidence" value="ECO:0000315"/>
    <property type="project" value="UniProtKB"/>
</dbReference>
<dbReference type="GO" id="GO:0043687">
    <property type="term" value="P:post-translational protein modification"/>
    <property type="evidence" value="ECO:0000250"/>
    <property type="project" value="UniProtKB"/>
</dbReference>
<dbReference type="GO" id="GO:0048515">
    <property type="term" value="P:spermatid differentiation"/>
    <property type="evidence" value="ECO:0000250"/>
    <property type="project" value="UniProtKB"/>
</dbReference>
<dbReference type="FunFam" id="1.20.1540.10:FF:000009">
    <property type="entry name" value="Rhomboid domain containing 1"/>
    <property type="match status" value="1"/>
</dbReference>
<dbReference type="Gene3D" id="1.20.1540.10">
    <property type="entry name" value="Rhomboid-like"/>
    <property type="match status" value="1"/>
</dbReference>
<dbReference type="InterPro" id="IPR022764">
    <property type="entry name" value="Peptidase_S54_rhomboid_dom"/>
</dbReference>
<dbReference type="InterPro" id="IPR035952">
    <property type="entry name" value="Rhomboid-like_sf"/>
</dbReference>
<dbReference type="PANTHER" id="PTHR43066">
    <property type="entry name" value="RHOMBOID-RELATED PROTEIN"/>
    <property type="match status" value="1"/>
</dbReference>
<dbReference type="PANTHER" id="PTHR43066:SF14">
    <property type="entry name" value="RHOMBOID-RELATED PROTEIN 4"/>
    <property type="match status" value="1"/>
</dbReference>
<dbReference type="Pfam" id="PF01694">
    <property type="entry name" value="Rhomboid"/>
    <property type="match status" value="1"/>
</dbReference>
<dbReference type="SUPFAM" id="SSF144091">
    <property type="entry name" value="Rhomboid-like"/>
    <property type="match status" value="1"/>
</dbReference>
<proteinExistence type="evidence at protein level"/>
<feature type="chain" id="PRO_0000254189" description="Rhomboid-related protein 4">
    <location>
        <begin position="1"/>
        <end position="315"/>
    </location>
</feature>
<feature type="topological domain" description="Cytoplasmic" evidence="2">
    <location>
        <begin position="1"/>
        <end position="21"/>
    </location>
</feature>
<feature type="transmembrane region" description="Helical" evidence="2">
    <location>
        <begin position="22"/>
        <end position="42"/>
    </location>
</feature>
<feature type="topological domain" description="Extracellular" evidence="2">
    <location>
        <begin position="43"/>
        <end position="106"/>
    </location>
</feature>
<feature type="transmembrane region" description="Helical" evidence="2">
    <location>
        <begin position="107"/>
        <end position="127"/>
    </location>
</feature>
<feature type="topological domain" description="Cytoplasmic" evidence="2">
    <location>
        <begin position="128"/>
        <end position="138"/>
    </location>
</feature>
<feature type="transmembrane region" description="Helical" evidence="2">
    <location>
        <begin position="139"/>
        <end position="157"/>
    </location>
</feature>
<feature type="topological domain" description="Extracellular" evidence="2">
    <location>
        <begin position="158"/>
        <end position="180"/>
    </location>
</feature>
<feature type="transmembrane region" description="Helical" evidence="2">
    <location>
        <begin position="181"/>
        <end position="201"/>
    </location>
</feature>
<feature type="topological domain" description="Cytoplasmic" evidence="2">
    <location>
        <begin position="202"/>
        <end position="315"/>
    </location>
</feature>
<feature type="region of interest" description="Ubiquitin-binding domain (UBD)" evidence="1">
    <location>
        <begin position="269"/>
        <end position="284"/>
    </location>
</feature>
<feature type="region of interest" description="Disordered" evidence="3">
    <location>
        <begin position="283"/>
        <end position="315"/>
    </location>
</feature>
<feature type="region of interest" description="VCP/p97-interacting motif (VIM)" evidence="1">
    <location>
        <begin position="301"/>
        <end position="315"/>
    </location>
</feature>
<feature type="compositionally biased region" description="Basic and acidic residues" evidence="3">
    <location>
        <begin position="300"/>
        <end position="315"/>
    </location>
</feature>
<feature type="active site" description="Nucleophile" evidence="1">
    <location>
        <position position="144"/>
    </location>
</feature>
<feature type="active site" evidence="1">
    <location>
        <position position="195"/>
    </location>
</feature>
<feature type="splice variant" id="VSP_021203" description="In isoform 2." evidence="7">
    <location>
        <begin position="1"/>
        <end position="209"/>
    </location>
</feature>
<feature type="splice variant" id="VSP_021204" description="In isoform 2." evidence="7">
    <original>LKKIMEACA</original>
    <variation>MPVFLFKPK</variation>
    <location>
        <begin position="210"/>
        <end position="218"/>
    </location>
</feature>
<feature type="sequence variant" id="VAR_034454" description="In dbSNP:rs35731955.">
    <original>A</original>
    <variation>T</variation>
    <location>
        <position position="110"/>
    </location>
</feature>
<feature type="mutagenesis site" description="Enzyme inactivation. Reduces the cleavage of BIK." evidence="4">
    <original>G</original>
    <variation>A</variation>
    <location>
        <position position="142"/>
    </location>
</feature>
<feature type="mutagenesis site" description="Enzyme inactivation. Reduces the cleavage of BIK and TSAP6. Increases TSAP6-mediated exosome secretion." evidence="4 5">
    <original>S</original>
    <variation>A</variation>
    <location>
        <position position="144"/>
    </location>
</feature>
<feature type="sequence conflict" description="In Ref. 4; AAI01263." evidence="8" ref="4">
    <original>T</original>
    <variation>M</variation>
    <location>
        <position position="263"/>
    </location>
</feature>
<feature type="helix" evidence="10">
    <location>
        <begin position="301"/>
        <end position="313"/>
    </location>
</feature>
<name>RHBL4_HUMAN</name>
<keyword id="KW-0002">3D-structure</keyword>
<keyword id="KW-0025">Alternative splicing</keyword>
<keyword id="KW-0053">Apoptosis</keyword>
<keyword id="KW-0221">Differentiation</keyword>
<keyword id="KW-0256">Endoplasmic reticulum</keyword>
<keyword id="KW-0378">Hydrolase</keyword>
<keyword id="KW-0472">Membrane</keyword>
<keyword id="KW-0496">Mitochondrion</keyword>
<keyword id="KW-0645">Protease</keyword>
<keyword id="KW-1267">Proteomics identification</keyword>
<keyword id="KW-1185">Reference proteome</keyword>
<keyword id="KW-0720">Serine protease</keyword>
<keyword id="KW-0744">Spermatogenesis</keyword>
<keyword id="KW-0812">Transmembrane</keyword>
<keyword id="KW-1133">Transmembrane helix</keyword>
<sequence length="315" mass="35823">MQRRSRGINTGLILLLSQIFHVGINNIPPVTLATLALNIWFFLNPQKPLYSSCLSVEKCYQQKDWQRLLLSPLHHADDWHLYFNMASMLWKGINLERRLGSRWFAYVITAFSVLTGVVYLLLQFAVAEFMDEPDFKRSCAVGFSGVLFALKVLNNHYCPGGFVNILGFPVPNRFACWVELVAIHLFSPGTSFAGHLAGILVGLMYTQGPLKKIMEACAGGFSSSVGYPGRQYYFNSSGSSGYQDYYPHGRPDHYEEAPRNYDTYTAGLSEEEQLERALQASLWDRGNTRNSPPPYGFHLSPEEMRRQRLHRFDSQ</sequence>
<comment type="function">
    <text evidence="4 5">Intramembrane-cleaving serine protease that cleaves single transmembrane or multi-pass membrane proteins in the hydrophobic plane of the membrane, luminal loops and juxtamembrane regions. Involved in regulated intramembrane proteolysis and the subsequent release of functional polypeptides from their membrane anchors. Functional component of endoplasmic reticulum-associated degradation (ERAD) for misfolded membrane proteins. Required for the degradation process of some specific misfolded endoplasmic reticulum (ER) luminal proteins. Participates in the transfer of misfolded proteins from the ER to the cytosol, where they are destroyed by the proteasome in a ubiquitin-dependent manner. Functions in BIK, MPZ, PKD1, PTCRA, RHO, STEAP3 and TRAC processing. Involved in the regulation of exosomal secretion; inhibits the TSAP6-mediated secretion pathway. Involved in the regulation of apoptosis; modulates BIK-mediated apoptotic activity. Also plays a role in the regulation of spermatogenesis; inhibits apoptotic activity in spermatogonia.</text>
</comment>
<comment type="catalytic activity">
    <reaction>
        <text>Cleaves type-1 transmembrane domains using a catalytic dyad composed of serine and histidine that are contributed by different transmembrane domains.</text>
        <dbReference type="EC" id="3.4.21.105"/>
    </reaction>
</comment>
<comment type="activity regulation">
    <text evidence="4">Inhibited by aprotinin.</text>
</comment>
<comment type="subunit">
    <text evidence="1 4 5">Interacts (via C-terminal domain) with VCP. Interacts with ubiquitin and ubiquitinated proteins (By similarity). Interacts with BIK and STEAP3.</text>
</comment>
<comment type="interaction">
    <interactant intactId="EBI-9916444">
        <id>Q8TEB9</id>
    </interactant>
    <interactant intactId="EBI-2130213">
        <id>Q99675</id>
        <label>CGRRF1</label>
    </interactant>
    <organismsDiffer>false</organismsDiffer>
    <experiments>3</experiments>
</comment>
<comment type="interaction">
    <interactant intactId="EBI-9916444">
        <id>Q8TEB9</id>
    </interactant>
    <interactant intactId="EBI-11522780">
        <id>Q96DZ9-2</id>
        <label>CMTM5</label>
    </interactant>
    <organismsDiffer>false</organismsDiffer>
    <experiments>3</experiments>
</comment>
<comment type="interaction">
    <interactant intactId="EBI-9916444">
        <id>Q8TEB9</id>
    </interactant>
    <interactant intactId="EBI-6942903">
        <id>Q96BA8</id>
        <label>CREB3L1</label>
    </interactant>
    <organismsDiffer>false</organismsDiffer>
    <experiments>3</experiments>
</comment>
<comment type="interaction">
    <interactant intactId="EBI-9916444">
        <id>Q8TEB9</id>
    </interactant>
    <interactant intactId="EBI-7797098">
        <id>P04921</id>
        <label>GYPC</label>
    </interactant>
    <organismsDiffer>false</organismsDiffer>
    <experiments>3</experiments>
</comment>
<comment type="interaction">
    <interactant intactId="EBI-9916444">
        <id>Q8TEB9</id>
    </interactant>
    <interactant intactId="EBI-4280011">
        <id>Q7L5N7</id>
        <label>LPCAT2</label>
    </interactant>
    <organismsDiffer>false</organismsDiffer>
    <experiments>3</experiments>
</comment>
<comment type="interaction">
    <interactant intactId="EBI-9916444">
        <id>Q8TEB9</id>
    </interactant>
    <interactant intactId="EBI-4280135">
        <id>Q15738</id>
        <label>NSDHL</label>
    </interactant>
    <organismsDiffer>false</organismsDiffer>
    <experiments>3</experiments>
</comment>
<comment type="interaction">
    <interactant intactId="EBI-9916444">
        <id>Q8TEB9</id>
    </interactant>
    <interactant intactId="EBI-373552">
        <id>Q96CS7</id>
        <label>PLEKHB2</label>
    </interactant>
    <organismsDiffer>false</organismsDiffer>
    <experiments>3</experiments>
</comment>
<comment type="interaction">
    <interactant intactId="EBI-9916444">
        <id>Q8TEB9</id>
    </interactant>
    <interactant intactId="EBI-14210385">
        <id>Q59EV6</id>
        <label>PPGB</label>
    </interactant>
    <organismsDiffer>false</organismsDiffer>
    <experiments>3</experiments>
</comment>
<comment type="interaction">
    <interactant intactId="EBI-9916444">
        <id>Q8TEB9</id>
    </interactant>
    <interactant intactId="EBI-348482">
        <id>Q99942</id>
        <label>RNF5</label>
    </interactant>
    <organismsDiffer>false</organismsDiffer>
    <experiments>4</experiments>
</comment>
<comment type="interaction">
    <interactant intactId="EBI-9916444">
        <id>Q8TEB9</id>
    </interactant>
    <interactant intactId="EBI-1058865">
        <id>O75396</id>
        <label>SEC22B</label>
    </interactant>
    <organismsDiffer>false</organismsDiffer>
    <experiments>3</experiments>
</comment>
<comment type="interaction">
    <interactant intactId="EBI-9916444">
        <id>Q8TEB9</id>
    </interactant>
    <interactant intactId="EBI-3907610">
        <id>Q8N2U9</id>
        <label>SLC66A2</label>
    </interactant>
    <organismsDiffer>false</organismsDiffer>
    <experiments>3</experiments>
</comment>
<comment type="interaction">
    <interactant intactId="EBI-9916444">
        <id>Q8TEB9</id>
    </interactant>
    <interactant intactId="EBI-12038591">
        <id>Q69YG0</id>
        <label>TMEM42</label>
    </interactant>
    <organismsDiffer>false</organismsDiffer>
    <experiments>3</experiments>
</comment>
<comment type="interaction">
    <interactant intactId="EBI-9916444">
        <id>Q8TEB9</id>
    </interactant>
    <interactant intactId="EBI-2548832">
        <id>Q8N661</id>
        <label>TMEM86B</label>
    </interactant>
    <organismsDiffer>false</organismsDiffer>
    <experiments>3</experiments>
</comment>
<comment type="subcellular location">
    <subcellularLocation>
        <location evidence="6">Endoplasmic reticulum membrane</location>
        <topology evidence="2">Multi-pass membrane protein</topology>
    </subcellularLocation>
    <subcellularLocation>
        <location evidence="4">Mitochondrion membrane</location>
        <topology evidence="2">Multi-pass membrane protein</topology>
    </subcellularLocation>
</comment>
<comment type="alternative products">
    <event type="alternative splicing"/>
    <isoform>
        <id>Q8TEB9-1</id>
        <name>1</name>
        <sequence type="displayed"/>
    </isoform>
    <isoform>
        <id>Q8TEB9-2</id>
        <name>2</name>
        <sequence type="described" ref="VSP_021203 VSP_021204"/>
    </isoform>
</comment>
<comment type="tissue specificity">
    <text>Expressed strongly in testis.</text>
</comment>
<comment type="induction">
    <text evidence="6">Up-regulated by endoplasmic reticulum stress agents that induce the unfolded protein response (UPR).</text>
</comment>
<comment type="similarity">
    <text evidence="8">Belongs to the peptidase S54 family.</text>
</comment>
<comment type="caution">
    <text evidence="9">One study reported that the protein is not localized in the mitochondrion.</text>
</comment>
<gene>
    <name type="primary">RHBDD1</name>
    <name type="synonym">RHBDL4</name>
    <name type="ORF">HSD-50</name>
    <name type="ORF">HSD50</name>
</gene>
<reference key="1">
    <citation type="submission" date="2004-05" db="EMBL/GenBank/DDBJ databases">
        <title>A new spermatogenesis-related gene.</title>
        <authorList>
            <person name="Wang Y."/>
            <person name="Miao S.Y."/>
            <person name="Zhang X.D."/>
            <person name="Qiao Y."/>
            <person name="Liang G."/>
            <person name="Wang L.F."/>
        </authorList>
    </citation>
    <scope>NUCLEOTIDE SEQUENCE [LARGE SCALE MRNA] (ISOFORM 1)</scope>
    <source>
        <tissue>Testis</tissue>
    </source>
</reference>
<reference key="2">
    <citation type="journal article" date="2004" name="Nat. Genet.">
        <title>Complete sequencing and characterization of 21,243 full-length human cDNAs.</title>
        <authorList>
            <person name="Ota T."/>
            <person name="Suzuki Y."/>
            <person name="Nishikawa T."/>
            <person name="Otsuki T."/>
            <person name="Sugiyama T."/>
            <person name="Irie R."/>
            <person name="Wakamatsu A."/>
            <person name="Hayashi K."/>
            <person name="Sato H."/>
            <person name="Nagai K."/>
            <person name="Kimura K."/>
            <person name="Makita H."/>
            <person name="Sekine M."/>
            <person name="Obayashi M."/>
            <person name="Nishi T."/>
            <person name="Shibahara T."/>
            <person name="Tanaka T."/>
            <person name="Ishii S."/>
            <person name="Yamamoto J."/>
            <person name="Saito K."/>
            <person name="Kawai Y."/>
            <person name="Isono Y."/>
            <person name="Nakamura Y."/>
            <person name="Nagahari K."/>
            <person name="Murakami K."/>
            <person name="Yasuda T."/>
            <person name="Iwayanagi T."/>
            <person name="Wagatsuma M."/>
            <person name="Shiratori A."/>
            <person name="Sudo H."/>
            <person name="Hosoiri T."/>
            <person name="Kaku Y."/>
            <person name="Kodaira H."/>
            <person name="Kondo H."/>
            <person name="Sugawara M."/>
            <person name="Takahashi M."/>
            <person name="Kanda K."/>
            <person name="Yokoi T."/>
            <person name="Furuya T."/>
            <person name="Kikkawa E."/>
            <person name="Omura Y."/>
            <person name="Abe K."/>
            <person name="Kamihara K."/>
            <person name="Katsuta N."/>
            <person name="Sato K."/>
            <person name="Tanikawa M."/>
            <person name="Yamazaki M."/>
            <person name="Ninomiya K."/>
            <person name="Ishibashi T."/>
            <person name="Yamashita H."/>
            <person name="Murakawa K."/>
            <person name="Fujimori K."/>
            <person name="Tanai H."/>
            <person name="Kimata M."/>
            <person name="Watanabe M."/>
            <person name="Hiraoka S."/>
            <person name="Chiba Y."/>
            <person name="Ishida S."/>
            <person name="Ono Y."/>
            <person name="Takiguchi S."/>
            <person name="Watanabe S."/>
            <person name="Yosida M."/>
            <person name="Hotuta T."/>
            <person name="Kusano J."/>
            <person name="Kanehori K."/>
            <person name="Takahashi-Fujii A."/>
            <person name="Hara H."/>
            <person name="Tanase T.-O."/>
            <person name="Nomura Y."/>
            <person name="Togiya S."/>
            <person name="Komai F."/>
            <person name="Hara R."/>
            <person name="Takeuchi K."/>
            <person name="Arita M."/>
            <person name="Imose N."/>
            <person name="Musashino K."/>
            <person name="Yuuki H."/>
            <person name="Oshima A."/>
            <person name="Sasaki N."/>
            <person name="Aotsuka S."/>
            <person name="Yoshikawa Y."/>
            <person name="Matsunawa H."/>
            <person name="Ichihara T."/>
            <person name="Shiohata N."/>
            <person name="Sano S."/>
            <person name="Moriya S."/>
            <person name="Momiyama H."/>
            <person name="Satoh N."/>
            <person name="Takami S."/>
            <person name="Terashima Y."/>
            <person name="Suzuki O."/>
            <person name="Nakagawa S."/>
            <person name="Senoh A."/>
            <person name="Mizoguchi H."/>
            <person name="Goto Y."/>
            <person name="Shimizu F."/>
            <person name="Wakebe H."/>
            <person name="Hishigaki H."/>
            <person name="Watanabe T."/>
            <person name="Sugiyama A."/>
            <person name="Takemoto M."/>
            <person name="Kawakami B."/>
            <person name="Yamazaki M."/>
            <person name="Watanabe K."/>
            <person name="Kumagai A."/>
            <person name="Itakura S."/>
            <person name="Fukuzumi Y."/>
            <person name="Fujimori Y."/>
            <person name="Komiyama M."/>
            <person name="Tashiro H."/>
            <person name="Tanigami A."/>
            <person name="Fujiwara T."/>
            <person name="Ono T."/>
            <person name="Yamada K."/>
            <person name="Fujii Y."/>
            <person name="Ozaki K."/>
            <person name="Hirao M."/>
            <person name="Ohmori Y."/>
            <person name="Kawabata A."/>
            <person name="Hikiji T."/>
            <person name="Kobatake N."/>
            <person name="Inagaki H."/>
            <person name="Ikema Y."/>
            <person name="Okamoto S."/>
            <person name="Okitani R."/>
            <person name="Kawakami T."/>
            <person name="Noguchi S."/>
            <person name="Itoh T."/>
            <person name="Shigeta K."/>
            <person name="Senba T."/>
            <person name="Matsumura K."/>
            <person name="Nakajima Y."/>
            <person name="Mizuno T."/>
            <person name="Morinaga M."/>
            <person name="Sasaki M."/>
            <person name="Togashi T."/>
            <person name="Oyama M."/>
            <person name="Hata H."/>
            <person name="Watanabe M."/>
            <person name="Komatsu T."/>
            <person name="Mizushima-Sugano J."/>
            <person name="Satoh T."/>
            <person name="Shirai Y."/>
            <person name="Takahashi Y."/>
            <person name="Nakagawa K."/>
            <person name="Okumura K."/>
            <person name="Nagase T."/>
            <person name="Nomura N."/>
            <person name="Kikuchi H."/>
            <person name="Masuho Y."/>
            <person name="Yamashita R."/>
            <person name="Nakai K."/>
            <person name="Yada T."/>
            <person name="Nakamura Y."/>
            <person name="Ohara O."/>
            <person name="Isogai T."/>
            <person name="Sugano S."/>
        </authorList>
    </citation>
    <scope>NUCLEOTIDE SEQUENCE [LARGE SCALE MRNA] (ISOFORM 1)</scope>
</reference>
<reference key="3">
    <citation type="journal article" date="2005" name="Nature">
        <title>Generation and annotation of the DNA sequences of human chromosomes 2 and 4.</title>
        <authorList>
            <person name="Hillier L.W."/>
            <person name="Graves T.A."/>
            <person name="Fulton R.S."/>
            <person name="Fulton L.A."/>
            <person name="Pepin K.H."/>
            <person name="Minx P."/>
            <person name="Wagner-McPherson C."/>
            <person name="Layman D."/>
            <person name="Wylie K."/>
            <person name="Sekhon M."/>
            <person name="Becker M.C."/>
            <person name="Fewell G.A."/>
            <person name="Delehaunty K.D."/>
            <person name="Miner T.L."/>
            <person name="Nash W.E."/>
            <person name="Kremitzki C."/>
            <person name="Oddy L."/>
            <person name="Du H."/>
            <person name="Sun H."/>
            <person name="Bradshaw-Cordum H."/>
            <person name="Ali J."/>
            <person name="Carter J."/>
            <person name="Cordes M."/>
            <person name="Harris A."/>
            <person name="Isak A."/>
            <person name="van Brunt A."/>
            <person name="Nguyen C."/>
            <person name="Du F."/>
            <person name="Courtney L."/>
            <person name="Kalicki J."/>
            <person name="Ozersky P."/>
            <person name="Abbott S."/>
            <person name="Armstrong J."/>
            <person name="Belter E.A."/>
            <person name="Caruso L."/>
            <person name="Cedroni M."/>
            <person name="Cotton M."/>
            <person name="Davidson T."/>
            <person name="Desai A."/>
            <person name="Elliott G."/>
            <person name="Erb T."/>
            <person name="Fronick C."/>
            <person name="Gaige T."/>
            <person name="Haakenson W."/>
            <person name="Haglund K."/>
            <person name="Holmes A."/>
            <person name="Harkins R."/>
            <person name="Kim K."/>
            <person name="Kruchowski S.S."/>
            <person name="Strong C.M."/>
            <person name="Grewal N."/>
            <person name="Goyea E."/>
            <person name="Hou S."/>
            <person name="Levy A."/>
            <person name="Martinka S."/>
            <person name="Mead K."/>
            <person name="McLellan M.D."/>
            <person name="Meyer R."/>
            <person name="Randall-Maher J."/>
            <person name="Tomlinson C."/>
            <person name="Dauphin-Kohlberg S."/>
            <person name="Kozlowicz-Reilly A."/>
            <person name="Shah N."/>
            <person name="Swearengen-Shahid S."/>
            <person name="Snider J."/>
            <person name="Strong J.T."/>
            <person name="Thompson J."/>
            <person name="Yoakum M."/>
            <person name="Leonard S."/>
            <person name="Pearman C."/>
            <person name="Trani L."/>
            <person name="Radionenko M."/>
            <person name="Waligorski J.E."/>
            <person name="Wang C."/>
            <person name="Rock S.M."/>
            <person name="Tin-Wollam A.-M."/>
            <person name="Maupin R."/>
            <person name="Latreille P."/>
            <person name="Wendl M.C."/>
            <person name="Yang S.-P."/>
            <person name="Pohl C."/>
            <person name="Wallis J.W."/>
            <person name="Spieth J."/>
            <person name="Bieri T.A."/>
            <person name="Berkowicz N."/>
            <person name="Nelson J.O."/>
            <person name="Osborne J."/>
            <person name="Ding L."/>
            <person name="Meyer R."/>
            <person name="Sabo A."/>
            <person name="Shotland Y."/>
            <person name="Sinha P."/>
            <person name="Wohldmann P.E."/>
            <person name="Cook L.L."/>
            <person name="Hickenbotham M.T."/>
            <person name="Eldred J."/>
            <person name="Williams D."/>
            <person name="Jones T.A."/>
            <person name="She X."/>
            <person name="Ciccarelli F.D."/>
            <person name="Izaurralde E."/>
            <person name="Taylor J."/>
            <person name="Schmutz J."/>
            <person name="Myers R.M."/>
            <person name="Cox D.R."/>
            <person name="Huang X."/>
            <person name="McPherson J.D."/>
            <person name="Mardis E.R."/>
            <person name="Clifton S.W."/>
            <person name="Warren W.C."/>
            <person name="Chinwalla A.T."/>
            <person name="Eddy S.R."/>
            <person name="Marra M.A."/>
            <person name="Ovcharenko I."/>
            <person name="Furey T.S."/>
            <person name="Miller W."/>
            <person name="Eichler E.E."/>
            <person name="Bork P."/>
            <person name="Suyama M."/>
            <person name="Torrents D."/>
            <person name="Waterston R.H."/>
            <person name="Wilson R.K."/>
        </authorList>
    </citation>
    <scope>NUCLEOTIDE SEQUENCE [LARGE SCALE GENOMIC DNA]</scope>
</reference>
<reference key="4">
    <citation type="journal article" date="2004" name="Genome Res.">
        <title>The status, quality, and expansion of the NIH full-length cDNA project: the Mammalian Gene Collection (MGC).</title>
        <authorList>
            <consortium name="The MGC Project Team"/>
        </authorList>
    </citation>
    <scope>NUCLEOTIDE SEQUENCE [LARGE SCALE MRNA] (ISOFORMS 1 AND 2)</scope>
    <source>
        <tissue>Eye</tissue>
        <tissue>Lymph</tissue>
        <tissue>Pancreas</tissue>
    </source>
</reference>
<reference key="5">
    <citation type="journal article" date="2007" name="BMC Genomics">
        <title>The full-ORF clone resource of the German cDNA consortium.</title>
        <authorList>
            <person name="Bechtel S."/>
            <person name="Rosenfelder H."/>
            <person name="Duda A."/>
            <person name="Schmidt C.P."/>
            <person name="Ernst U."/>
            <person name="Wellenreuther R."/>
            <person name="Mehrle A."/>
            <person name="Schuster C."/>
            <person name="Bahr A."/>
            <person name="Bloecker H."/>
            <person name="Heubner D."/>
            <person name="Hoerlein A."/>
            <person name="Michel G."/>
            <person name="Wedler H."/>
            <person name="Koehrer K."/>
            <person name="Ottenwaelder B."/>
            <person name="Poustka A."/>
            <person name="Wiemann S."/>
            <person name="Schupp I."/>
        </authorList>
    </citation>
    <scope>NUCLEOTIDE SEQUENCE [LARGE SCALE MRNA] OF 280-315</scope>
    <source>
        <tissue>Brain</tissue>
    </source>
</reference>
<reference key="6">
    <citation type="journal article" date="2008" name="Cell. Mol. Life Sci.">
        <title>A novel member of the Rhomboid family, RHBDD1, regulates BIK-mediated apoptosis.</title>
        <authorList>
            <person name="Wang Y."/>
            <person name="Guan X."/>
            <person name="Fok K.L."/>
            <person name="Li S."/>
            <person name="Zhang X."/>
            <person name="Miao S."/>
            <person name="Zong S."/>
            <person name="Koide S.S."/>
            <person name="Chan H.C."/>
            <person name="Wang L."/>
        </authorList>
    </citation>
    <scope>FUNCTION IN CLEAVAGE OF BIK</scope>
    <scope>ACTIVITY REGULATION</scope>
    <scope>SUBCELLULAR LOCATION</scope>
    <scope>INTERACTION WITH BIK</scope>
    <scope>MUTAGENESIS OF GLY-142 AND SER-144</scope>
</reference>
<reference key="7">
    <citation type="journal article" date="2012" name="PLoS ONE">
        <title>Exosome-related multi-pass transmembrane protein TSAP6 is a target of rhomboid protease RHBDD1-induced proteolysis.</title>
        <authorList>
            <person name="Wan C."/>
            <person name="Fu J."/>
            <person name="Wang Y."/>
            <person name="Miao S."/>
            <person name="Song W."/>
            <person name="Wang L."/>
        </authorList>
    </citation>
    <scope>FUNCTION IN CLEAVAGE OF STEAP3</scope>
    <scope>INTERACTION WITH STEAP3</scope>
    <scope>MUTAGENESIS OF SER-144</scope>
</reference>
<reference key="8">
    <citation type="journal article" date="2012" name="Mol. Cell">
        <title>Ubiquitin-dependent intramembrane rhomboid protease promotes ERAD of membrane proteins.</title>
        <authorList>
            <person name="Fleig L."/>
            <person name="Bergbold N."/>
            <person name="Sahasrabudhe P."/>
            <person name="Geiger B."/>
            <person name="Kaltak L."/>
            <person name="Lemberg M.K."/>
        </authorList>
    </citation>
    <scope>INDUCTION</scope>
    <scope>SUBCELLULAR LOCATION</scope>
</reference>
<organism>
    <name type="scientific">Homo sapiens</name>
    <name type="common">Human</name>
    <dbReference type="NCBI Taxonomy" id="9606"/>
    <lineage>
        <taxon>Eukaryota</taxon>
        <taxon>Metazoa</taxon>
        <taxon>Chordata</taxon>
        <taxon>Craniata</taxon>
        <taxon>Vertebrata</taxon>
        <taxon>Euteleostomi</taxon>
        <taxon>Mammalia</taxon>
        <taxon>Eutheria</taxon>
        <taxon>Euarchontoglires</taxon>
        <taxon>Primates</taxon>
        <taxon>Haplorrhini</taxon>
        <taxon>Catarrhini</taxon>
        <taxon>Hominidae</taxon>
        <taxon>Homo</taxon>
    </lineage>
</organism>
<protein>
    <recommendedName>
        <fullName>Rhomboid-related protein 4</fullName>
        <shortName>RRP4</shortName>
        <ecNumber>3.4.21.105</ecNumber>
    </recommendedName>
    <alternativeName>
        <fullName>Rhomboid domain-containing protein 1</fullName>
    </alternativeName>
    <alternativeName>
        <fullName>Rhomboid-like protein 4</fullName>
    </alternativeName>
</protein>